<accession>Q1K4R6</accession>
<accession>Q871M1</accession>
<reference key="1">
    <citation type="journal article" date="2003" name="Nucleic Acids Res.">
        <title>What's in the genome of a filamentous fungus? Analysis of the Neurospora genome sequence.</title>
        <authorList>
            <person name="Mannhaupt G."/>
            <person name="Montrone C."/>
            <person name="Haase D."/>
            <person name="Mewes H.-W."/>
            <person name="Aign V."/>
            <person name="Hoheisel J.D."/>
            <person name="Fartmann B."/>
            <person name="Nyakatura G."/>
            <person name="Kempken F."/>
            <person name="Maier J."/>
            <person name="Schulte U."/>
        </authorList>
    </citation>
    <scope>NUCLEOTIDE SEQUENCE [LARGE SCALE GENOMIC DNA]</scope>
    <source>
        <strain>ATCC 24698 / 74-OR23-1A / CBS 708.71 / DSM 1257 / FGSC 987</strain>
    </source>
</reference>
<reference key="2">
    <citation type="journal article" date="2003" name="Nature">
        <title>The genome sequence of the filamentous fungus Neurospora crassa.</title>
        <authorList>
            <person name="Galagan J.E."/>
            <person name="Calvo S.E."/>
            <person name="Borkovich K.A."/>
            <person name="Selker E.U."/>
            <person name="Read N.D."/>
            <person name="Jaffe D.B."/>
            <person name="FitzHugh W."/>
            <person name="Ma L.-J."/>
            <person name="Smirnov S."/>
            <person name="Purcell S."/>
            <person name="Rehman B."/>
            <person name="Elkins T."/>
            <person name="Engels R."/>
            <person name="Wang S."/>
            <person name="Nielsen C.B."/>
            <person name="Butler J."/>
            <person name="Endrizzi M."/>
            <person name="Qui D."/>
            <person name="Ianakiev P."/>
            <person name="Bell-Pedersen D."/>
            <person name="Nelson M.A."/>
            <person name="Werner-Washburne M."/>
            <person name="Selitrennikoff C.P."/>
            <person name="Kinsey J.A."/>
            <person name="Braun E.L."/>
            <person name="Zelter A."/>
            <person name="Schulte U."/>
            <person name="Kothe G.O."/>
            <person name="Jedd G."/>
            <person name="Mewes H.-W."/>
            <person name="Staben C."/>
            <person name="Marcotte E."/>
            <person name="Greenberg D."/>
            <person name="Roy A."/>
            <person name="Foley K."/>
            <person name="Naylor J."/>
            <person name="Stange-Thomann N."/>
            <person name="Barrett R."/>
            <person name="Gnerre S."/>
            <person name="Kamal M."/>
            <person name="Kamvysselis M."/>
            <person name="Mauceli E.W."/>
            <person name="Bielke C."/>
            <person name="Rudd S."/>
            <person name="Frishman D."/>
            <person name="Krystofova S."/>
            <person name="Rasmussen C."/>
            <person name="Metzenberg R.L."/>
            <person name="Perkins D.D."/>
            <person name="Kroken S."/>
            <person name="Cogoni C."/>
            <person name="Macino G."/>
            <person name="Catcheside D.E.A."/>
            <person name="Li W."/>
            <person name="Pratt R.J."/>
            <person name="Osmani S.A."/>
            <person name="DeSouza C.P.C."/>
            <person name="Glass N.L."/>
            <person name="Orbach M.J."/>
            <person name="Berglund J.A."/>
            <person name="Voelker R."/>
            <person name="Yarden O."/>
            <person name="Plamann M."/>
            <person name="Seiler S."/>
            <person name="Dunlap J.C."/>
            <person name="Radford A."/>
            <person name="Aramayo R."/>
            <person name="Natvig D.O."/>
            <person name="Alex L.A."/>
            <person name="Mannhaupt G."/>
            <person name="Ebbole D.J."/>
            <person name="Freitag M."/>
            <person name="Paulsen I."/>
            <person name="Sachs M.S."/>
            <person name="Lander E.S."/>
            <person name="Nusbaum C."/>
            <person name="Birren B.W."/>
        </authorList>
    </citation>
    <scope>NUCLEOTIDE SEQUENCE [LARGE SCALE GENOMIC DNA]</scope>
    <source>
        <strain>ATCC 24698 / 74-OR23-1A / CBS 708.71 / DSM 1257 / FGSC 987</strain>
    </source>
</reference>
<dbReference type="EC" id="3.6.1.66" evidence="1"/>
<dbReference type="EMBL" id="BX294023">
    <property type="protein sequence ID" value="CAD70978.1"/>
    <property type="molecule type" value="Genomic_DNA"/>
</dbReference>
<dbReference type="EMBL" id="CM002240">
    <property type="protein sequence ID" value="EAA26727.1"/>
    <property type="molecule type" value="Genomic_DNA"/>
</dbReference>
<dbReference type="RefSeq" id="XP_955963.1">
    <property type="nucleotide sequence ID" value="XM_950870.2"/>
</dbReference>
<dbReference type="SMR" id="Q1K4R6"/>
<dbReference type="FunCoup" id="Q1K4R6">
    <property type="interactions" value="722"/>
</dbReference>
<dbReference type="STRING" id="367110.Q1K4R6"/>
<dbReference type="PaxDb" id="5141-EFNCRP00000007593"/>
<dbReference type="EnsemblFungi" id="EAA26727">
    <property type="protein sequence ID" value="EAA26727"/>
    <property type="gene ID" value="NCU01441"/>
</dbReference>
<dbReference type="GeneID" id="3872114"/>
<dbReference type="KEGG" id="ncr:NCU01441"/>
<dbReference type="VEuPathDB" id="FungiDB:NCU01441"/>
<dbReference type="HOGENOM" id="CLU_082080_1_1_1"/>
<dbReference type="InParanoid" id="Q1K4R6"/>
<dbReference type="OMA" id="YDPIFQP"/>
<dbReference type="OrthoDB" id="6288734at2759"/>
<dbReference type="Proteomes" id="UP000001805">
    <property type="component" value="Chromosome 2, Linkage Group V"/>
</dbReference>
<dbReference type="GO" id="GO:0005737">
    <property type="term" value="C:cytoplasm"/>
    <property type="evidence" value="ECO:0000318"/>
    <property type="project" value="GO_Central"/>
</dbReference>
<dbReference type="GO" id="GO:0005634">
    <property type="term" value="C:nucleus"/>
    <property type="evidence" value="ECO:0007669"/>
    <property type="project" value="UniProtKB-SubCell"/>
</dbReference>
<dbReference type="GO" id="GO:0035870">
    <property type="term" value="F:dITP diphosphatase activity"/>
    <property type="evidence" value="ECO:0007669"/>
    <property type="project" value="RHEA"/>
</dbReference>
<dbReference type="GO" id="GO:0036220">
    <property type="term" value="F:ITP diphosphatase activity"/>
    <property type="evidence" value="ECO:0007669"/>
    <property type="project" value="RHEA"/>
</dbReference>
<dbReference type="GO" id="GO:0046872">
    <property type="term" value="F:metal ion binding"/>
    <property type="evidence" value="ECO:0007669"/>
    <property type="project" value="UniProtKB-KW"/>
</dbReference>
<dbReference type="GO" id="GO:0047429">
    <property type="term" value="F:nucleoside triphosphate diphosphatase activity"/>
    <property type="evidence" value="ECO:0000318"/>
    <property type="project" value="GO_Central"/>
</dbReference>
<dbReference type="GO" id="GO:0000166">
    <property type="term" value="F:nucleotide binding"/>
    <property type="evidence" value="ECO:0007669"/>
    <property type="project" value="UniProtKB-KW"/>
</dbReference>
<dbReference type="GO" id="GO:0036222">
    <property type="term" value="F:XTP diphosphatase activity"/>
    <property type="evidence" value="ECO:0007669"/>
    <property type="project" value="RHEA"/>
</dbReference>
<dbReference type="GO" id="GO:0009204">
    <property type="term" value="P:deoxyribonucleoside triphosphate catabolic process"/>
    <property type="evidence" value="ECO:0007669"/>
    <property type="project" value="UniProtKB-UniRule"/>
</dbReference>
<dbReference type="GO" id="GO:0009143">
    <property type="term" value="P:nucleoside triphosphate catabolic process"/>
    <property type="evidence" value="ECO:0000318"/>
    <property type="project" value="GO_Central"/>
</dbReference>
<dbReference type="GO" id="GO:0009117">
    <property type="term" value="P:nucleotide metabolic process"/>
    <property type="evidence" value="ECO:0007669"/>
    <property type="project" value="UniProtKB-KW"/>
</dbReference>
<dbReference type="CDD" id="cd00515">
    <property type="entry name" value="HAM1"/>
    <property type="match status" value="1"/>
</dbReference>
<dbReference type="FunFam" id="3.90.950.10:FF:000003">
    <property type="entry name" value="Inosine triphosphate pyrophosphatase"/>
    <property type="match status" value="1"/>
</dbReference>
<dbReference type="Gene3D" id="3.90.950.10">
    <property type="match status" value="1"/>
</dbReference>
<dbReference type="HAMAP" id="MF_03148">
    <property type="entry name" value="HAM1_NTPase"/>
    <property type="match status" value="1"/>
</dbReference>
<dbReference type="InterPro" id="IPR027502">
    <property type="entry name" value="ITPase"/>
</dbReference>
<dbReference type="InterPro" id="IPR029001">
    <property type="entry name" value="ITPase-like_fam"/>
</dbReference>
<dbReference type="InterPro" id="IPR002637">
    <property type="entry name" value="RdgB/HAM1"/>
</dbReference>
<dbReference type="NCBIfam" id="TIGR00042">
    <property type="entry name" value="RdgB/HAM1 family non-canonical purine NTP pyrophosphatase"/>
    <property type="match status" value="1"/>
</dbReference>
<dbReference type="PANTHER" id="PTHR11067:SF9">
    <property type="entry name" value="INOSINE TRIPHOSPHATE PYROPHOSPHATASE"/>
    <property type="match status" value="1"/>
</dbReference>
<dbReference type="PANTHER" id="PTHR11067">
    <property type="entry name" value="INOSINE TRIPHOSPHATE PYROPHOSPHATASE/HAM1 PROTEIN"/>
    <property type="match status" value="1"/>
</dbReference>
<dbReference type="Pfam" id="PF01725">
    <property type="entry name" value="Ham1p_like"/>
    <property type="match status" value="1"/>
</dbReference>
<dbReference type="SUPFAM" id="SSF52972">
    <property type="entry name" value="ITPase-like"/>
    <property type="match status" value="1"/>
</dbReference>
<gene>
    <name type="ORF">B20D17.150</name>
    <name type="ORF">NCU01441</name>
</gene>
<protein>
    <recommendedName>
        <fullName evidence="1">Inosine triphosphate pyrophosphatase</fullName>
        <shortName evidence="1">ITPase</shortName>
        <shortName evidence="1">Inosine triphosphatase</shortName>
        <ecNumber evidence="1">3.6.1.66</ecNumber>
    </recommendedName>
    <alternativeName>
        <fullName evidence="1">Non-canonical purine NTP pyrophosphatase</fullName>
    </alternativeName>
    <alternativeName>
        <fullName evidence="1">Non-standard purine NTP pyrophosphatase</fullName>
    </alternativeName>
    <alternativeName>
        <fullName evidence="1">Nucleoside-triphosphate diphosphatase</fullName>
    </alternativeName>
    <alternativeName>
        <fullName evidence="1">Nucleoside-triphosphate pyrophosphatase</fullName>
        <shortName evidence="1">NTPase</shortName>
    </alternativeName>
    <alternativeName>
        <fullName evidence="1">XTP/dITP diphosphatase</fullName>
    </alternativeName>
</protein>
<feature type="chain" id="PRO_0000413145" description="Inosine triphosphate pyrophosphatase">
    <location>
        <begin position="1"/>
        <end position="191"/>
    </location>
</feature>
<feature type="binding site" evidence="1">
    <location>
        <begin position="15"/>
        <end position="20"/>
    </location>
    <ligand>
        <name>ITP</name>
        <dbReference type="ChEBI" id="CHEBI:61402"/>
    </ligand>
</feature>
<feature type="binding site" evidence="1">
    <location>
        <position position="43"/>
    </location>
    <ligand>
        <name>Mg(2+)</name>
        <dbReference type="ChEBI" id="CHEBI:18420"/>
    </ligand>
</feature>
<feature type="binding site" evidence="1">
    <location>
        <position position="55"/>
    </location>
    <ligand>
        <name>ITP</name>
        <dbReference type="ChEBI" id="CHEBI:61402"/>
    </ligand>
</feature>
<feature type="binding site" evidence="1">
    <location>
        <begin position="71"/>
        <end position="72"/>
    </location>
    <ligand>
        <name>ITP</name>
        <dbReference type="ChEBI" id="CHEBI:61402"/>
    </ligand>
</feature>
<feature type="binding site" evidence="1">
    <location>
        <position position="88"/>
    </location>
    <ligand>
        <name>ITP</name>
        <dbReference type="ChEBI" id="CHEBI:61402"/>
    </ligand>
</feature>
<feature type="binding site" evidence="1">
    <location>
        <begin position="147"/>
        <end position="150"/>
    </location>
    <ligand>
        <name>ITP</name>
        <dbReference type="ChEBI" id="CHEBI:61402"/>
    </ligand>
</feature>
<feature type="binding site" evidence="1">
    <location>
        <position position="168"/>
    </location>
    <ligand>
        <name>ITP</name>
        <dbReference type="ChEBI" id="CHEBI:61402"/>
    </ligand>
</feature>
<feature type="binding site" evidence="1">
    <location>
        <begin position="173"/>
        <end position="174"/>
    </location>
    <ligand>
        <name>ITP</name>
        <dbReference type="ChEBI" id="CHEBI:61402"/>
    </ligand>
</feature>
<evidence type="ECO:0000255" key="1">
    <source>
        <dbReference type="HAMAP-Rule" id="MF_03148"/>
    </source>
</evidence>
<comment type="function">
    <text evidence="1">Pyrophosphatase that hydrolyzes non-canonical purine nucleotides such as inosine triphosphate (ITP), deoxyinosine triphosphate (dITP) or xanthosine 5'-triphosphate (XTP) to their respective monophosphate derivatives. The enzyme does not distinguish between the deoxy- and ribose forms. Probably excludes non-canonical purines from RNA and DNA precursor pools, thus preventing their incorporation into RNA and DNA and avoiding chromosomal lesions.</text>
</comment>
<comment type="catalytic activity">
    <reaction evidence="1">
        <text>ITP + H2O = IMP + diphosphate + H(+)</text>
        <dbReference type="Rhea" id="RHEA:29399"/>
        <dbReference type="ChEBI" id="CHEBI:15377"/>
        <dbReference type="ChEBI" id="CHEBI:15378"/>
        <dbReference type="ChEBI" id="CHEBI:33019"/>
        <dbReference type="ChEBI" id="CHEBI:58053"/>
        <dbReference type="ChEBI" id="CHEBI:61402"/>
        <dbReference type="EC" id="3.6.1.66"/>
    </reaction>
    <physiologicalReaction direction="left-to-right" evidence="1">
        <dbReference type="Rhea" id="RHEA:29400"/>
    </physiologicalReaction>
</comment>
<comment type="catalytic activity">
    <reaction evidence="1">
        <text>dITP + H2O = dIMP + diphosphate + H(+)</text>
        <dbReference type="Rhea" id="RHEA:28342"/>
        <dbReference type="ChEBI" id="CHEBI:15377"/>
        <dbReference type="ChEBI" id="CHEBI:15378"/>
        <dbReference type="ChEBI" id="CHEBI:33019"/>
        <dbReference type="ChEBI" id="CHEBI:61194"/>
        <dbReference type="ChEBI" id="CHEBI:61382"/>
        <dbReference type="EC" id="3.6.1.66"/>
    </reaction>
    <physiologicalReaction direction="left-to-right" evidence="1">
        <dbReference type="Rhea" id="RHEA:28343"/>
    </physiologicalReaction>
</comment>
<comment type="catalytic activity">
    <reaction evidence="1">
        <text>XTP + H2O = XMP + diphosphate + H(+)</text>
        <dbReference type="Rhea" id="RHEA:28610"/>
        <dbReference type="ChEBI" id="CHEBI:15377"/>
        <dbReference type="ChEBI" id="CHEBI:15378"/>
        <dbReference type="ChEBI" id="CHEBI:33019"/>
        <dbReference type="ChEBI" id="CHEBI:57464"/>
        <dbReference type="ChEBI" id="CHEBI:61314"/>
        <dbReference type="EC" id="3.6.1.66"/>
    </reaction>
    <physiologicalReaction direction="left-to-right" evidence="1">
        <dbReference type="Rhea" id="RHEA:28611"/>
    </physiologicalReaction>
</comment>
<comment type="cofactor">
    <cofactor evidence="1">
        <name>Mg(2+)</name>
        <dbReference type="ChEBI" id="CHEBI:18420"/>
    </cofactor>
    <cofactor evidence="1">
        <name>Mn(2+)</name>
        <dbReference type="ChEBI" id="CHEBI:29035"/>
    </cofactor>
    <text evidence="1">Binds 1 divalent metal cation per subunit; can use either Mg(2+) or Mn(2+).</text>
</comment>
<comment type="subunit">
    <text evidence="1">Homodimer.</text>
</comment>
<comment type="subcellular location">
    <subcellularLocation>
        <location evidence="1">Cytoplasm</location>
    </subcellularLocation>
    <subcellularLocation>
        <location evidence="1">Nucleus</location>
    </subcellularLocation>
</comment>
<comment type="similarity">
    <text evidence="1">Belongs to the HAM1 NTPase family.</text>
</comment>
<organism>
    <name type="scientific">Neurospora crassa (strain ATCC 24698 / 74-OR23-1A / CBS 708.71 / DSM 1257 / FGSC 987)</name>
    <dbReference type="NCBI Taxonomy" id="367110"/>
    <lineage>
        <taxon>Eukaryota</taxon>
        <taxon>Fungi</taxon>
        <taxon>Dikarya</taxon>
        <taxon>Ascomycota</taxon>
        <taxon>Pezizomycotina</taxon>
        <taxon>Sordariomycetes</taxon>
        <taxon>Sordariomycetidae</taxon>
        <taxon>Sordariales</taxon>
        <taxon>Sordariaceae</taxon>
        <taxon>Neurospora</taxon>
    </lineage>
</organism>
<proteinExistence type="inferred from homology"/>
<keyword id="KW-0963">Cytoplasm</keyword>
<keyword id="KW-0378">Hydrolase</keyword>
<keyword id="KW-0460">Magnesium</keyword>
<keyword id="KW-0464">Manganese</keyword>
<keyword id="KW-0479">Metal-binding</keyword>
<keyword id="KW-0546">Nucleotide metabolism</keyword>
<keyword id="KW-0547">Nucleotide-binding</keyword>
<keyword id="KW-0539">Nucleus</keyword>
<keyword id="KW-1185">Reference proteome</keyword>
<sequence length="191" mass="20947">MSAPSQARHIVNFITGNANKLGEVKAILEPAIQVENQALDLLEIQGTLEEVTLDKCRRAADLVQGPVLVEDTCLCFNALKGLPGPYIKWFMNSLGHEGLNNLLAAYEDKSAKAVCTFGYSAGPGHEPILFQGITDGKIVPPRGPPNFGWDAIFEYEGQTYAEMDKAEKNKISHRAKALAKLQEWFAKEMTA</sequence>
<name>ITPA_NEUCR</name>